<organism>
    <name type="scientific">Prochlorococcus marinus (strain AS9601)</name>
    <dbReference type="NCBI Taxonomy" id="146891"/>
    <lineage>
        <taxon>Bacteria</taxon>
        <taxon>Bacillati</taxon>
        <taxon>Cyanobacteriota</taxon>
        <taxon>Cyanophyceae</taxon>
        <taxon>Synechococcales</taxon>
        <taxon>Prochlorococcaceae</taxon>
        <taxon>Prochlorococcus</taxon>
    </lineage>
</organism>
<keyword id="KW-0687">Ribonucleoprotein</keyword>
<keyword id="KW-0689">Ribosomal protein</keyword>
<keyword id="KW-0694">RNA-binding</keyword>
<keyword id="KW-0699">rRNA-binding</keyword>
<proteinExistence type="inferred from homology"/>
<comment type="function">
    <text evidence="1">One of the primary rRNA binding proteins, it binds directly near the 3'-end of the 23S rRNA, where it nucleates assembly of the 50S subunit.</text>
</comment>
<comment type="subunit">
    <text evidence="1">Part of the 50S ribosomal subunit. Forms a cluster with proteins L14 and L19.</text>
</comment>
<comment type="similarity">
    <text evidence="1">Belongs to the universal ribosomal protein uL3 family.</text>
</comment>
<name>RL3_PROMS</name>
<dbReference type="EMBL" id="CP000551">
    <property type="protein sequence ID" value="ABM71048.1"/>
    <property type="molecule type" value="Genomic_DNA"/>
</dbReference>
<dbReference type="RefSeq" id="WP_011819170.1">
    <property type="nucleotide sequence ID" value="NC_008816.1"/>
</dbReference>
<dbReference type="SMR" id="A2BTD7"/>
<dbReference type="STRING" id="146891.A9601_17651"/>
<dbReference type="KEGG" id="pmb:A9601_17651"/>
<dbReference type="eggNOG" id="COG0087">
    <property type="taxonomic scope" value="Bacteria"/>
</dbReference>
<dbReference type="HOGENOM" id="CLU_044142_4_1_3"/>
<dbReference type="OrthoDB" id="9806135at2"/>
<dbReference type="Proteomes" id="UP000002590">
    <property type="component" value="Chromosome"/>
</dbReference>
<dbReference type="GO" id="GO:0022625">
    <property type="term" value="C:cytosolic large ribosomal subunit"/>
    <property type="evidence" value="ECO:0007669"/>
    <property type="project" value="TreeGrafter"/>
</dbReference>
<dbReference type="GO" id="GO:0019843">
    <property type="term" value="F:rRNA binding"/>
    <property type="evidence" value="ECO:0007669"/>
    <property type="project" value="UniProtKB-UniRule"/>
</dbReference>
<dbReference type="GO" id="GO:0003735">
    <property type="term" value="F:structural constituent of ribosome"/>
    <property type="evidence" value="ECO:0007669"/>
    <property type="project" value="InterPro"/>
</dbReference>
<dbReference type="GO" id="GO:0006412">
    <property type="term" value="P:translation"/>
    <property type="evidence" value="ECO:0007669"/>
    <property type="project" value="UniProtKB-UniRule"/>
</dbReference>
<dbReference type="FunFam" id="3.30.160.810:FF:000001">
    <property type="entry name" value="50S ribosomal protein L3"/>
    <property type="match status" value="1"/>
</dbReference>
<dbReference type="FunFam" id="2.40.30.10:FF:000065">
    <property type="entry name" value="50S ribosomal protein L3, chloroplastic"/>
    <property type="match status" value="1"/>
</dbReference>
<dbReference type="Gene3D" id="3.30.160.810">
    <property type="match status" value="1"/>
</dbReference>
<dbReference type="Gene3D" id="2.40.30.10">
    <property type="entry name" value="Translation factors"/>
    <property type="match status" value="1"/>
</dbReference>
<dbReference type="HAMAP" id="MF_01325_B">
    <property type="entry name" value="Ribosomal_uL3_B"/>
    <property type="match status" value="1"/>
</dbReference>
<dbReference type="InterPro" id="IPR000597">
    <property type="entry name" value="Ribosomal_uL3"/>
</dbReference>
<dbReference type="InterPro" id="IPR019927">
    <property type="entry name" value="Ribosomal_uL3_bac/org-type"/>
</dbReference>
<dbReference type="InterPro" id="IPR019926">
    <property type="entry name" value="Ribosomal_uL3_CS"/>
</dbReference>
<dbReference type="InterPro" id="IPR009000">
    <property type="entry name" value="Transl_B-barrel_sf"/>
</dbReference>
<dbReference type="NCBIfam" id="TIGR03625">
    <property type="entry name" value="L3_bact"/>
    <property type="match status" value="1"/>
</dbReference>
<dbReference type="PANTHER" id="PTHR11229">
    <property type="entry name" value="50S RIBOSOMAL PROTEIN L3"/>
    <property type="match status" value="1"/>
</dbReference>
<dbReference type="PANTHER" id="PTHR11229:SF16">
    <property type="entry name" value="LARGE RIBOSOMAL SUBUNIT PROTEIN UL3C"/>
    <property type="match status" value="1"/>
</dbReference>
<dbReference type="Pfam" id="PF00297">
    <property type="entry name" value="Ribosomal_L3"/>
    <property type="match status" value="1"/>
</dbReference>
<dbReference type="SUPFAM" id="SSF50447">
    <property type="entry name" value="Translation proteins"/>
    <property type="match status" value="1"/>
</dbReference>
<dbReference type="PROSITE" id="PS00474">
    <property type="entry name" value="RIBOSOMAL_L3"/>
    <property type="match status" value="1"/>
</dbReference>
<feature type="chain" id="PRO_1000052110" description="Large ribosomal subunit protein uL3">
    <location>
        <begin position="1"/>
        <end position="217"/>
    </location>
</feature>
<feature type="region of interest" description="Disordered" evidence="2">
    <location>
        <begin position="127"/>
        <end position="162"/>
    </location>
</feature>
<feature type="compositionally biased region" description="Low complexity" evidence="2">
    <location>
        <begin position="142"/>
        <end position="153"/>
    </location>
</feature>
<protein>
    <recommendedName>
        <fullName evidence="1">Large ribosomal subunit protein uL3</fullName>
    </recommendedName>
    <alternativeName>
        <fullName evidence="3">50S ribosomal protein L3</fullName>
    </alternativeName>
</protein>
<sequence length="217" mass="23258">MSIGILGKKLGMSQLFDDKGNSVPVTLIEAGPCRVTQLKTTALDGYTAVQIGYGLSKEKHLSKPEKGHLLKSGEELLKHLKEYRVEETSSYEIGKQITVKNFEVGQKVDISGKSMGRGFAGYQKRHGFSRGPMSHGSKNHRAPGSTGAGTTPGRIYPGKRMAGRYGGKQITTKGLLVLKIDDQKNLLVVKGSVPGKPGSIINIKPNNVVGKKGGEKS</sequence>
<gene>
    <name evidence="1" type="primary">rplC</name>
    <name evidence="1" type="synonym">rpl3</name>
    <name type="ordered locus">A9601_17651</name>
</gene>
<accession>A2BTD7</accession>
<reference key="1">
    <citation type="journal article" date="2007" name="PLoS Genet.">
        <title>Patterns and implications of gene gain and loss in the evolution of Prochlorococcus.</title>
        <authorList>
            <person name="Kettler G.C."/>
            <person name="Martiny A.C."/>
            <person name="Huang K."/>
            <person name="Zucker J."/>
            <person name="Coleman M.L."/>
            <person name="Rodrigue S."/>
            <person name="Chen F."/>
            <person name="Lapidus A."/>
            <person name="Ferriera S."/>
            <person name="Johnson J."/>
            <person name="Steglich C."/>
            <person name="Church G.M."/>
            <person name="Richardson P."/>
            <person name="Chisholm S.W."/>
        </authorList>
    </citation>
    <scope>NUCLEOTIDE SEQUENCE [LARGE SCALE GENOMIC DNA]</scope>
    <source>
        <strain>AS9601</strain>
    </source>
</reference>
<evidence type="ECO:0000255" key="1">
    <source>
        <dbReference type="HAMAP-Rule" id="MF_01325"/>
    </source>
</evidence>
<evidence type="ECO:0000256" key="2">
    <source>
        <dbReference type="SAM" id="MobiDB-lite"/>
    </source>
</evidence>
<evidence type="ECO:0000305" key="3"/>